<evidence type="ECO:0000255" key="1">
    <source>
        <dbReference type="HAMAP-Rule" id="MF_01069"/>
    </source>
</evidence>
<proteinExistence type="inferred from homology"/>
<feature type="signal peptide" evidence="1">
    <location>
        <begin position="1"/>
        <end position="35"/>
    </location>
</feature>
<feature type="chain" id="PRO_1000073015" description="Glucans biosynthesis protein G">
    <location>
        <begin position="36"/>
        <end position="545"/>
    </location>
</feature>
<reference key="1">
    <citation type="submission" date="2007-03" db="EMBL/GenBank/DDBJ databases">
        <authorList>
            <person name="Heidelberg J."/>
        </authorList>
    </citation>
    <scope>NUCLEOTIDE SEQUENCE [LARGE SCALE GENOMIC DNA]</scope>
    <source>
        <strain>ATCC 39541 / Classical Ogawa 395 / O395</strain>
    </source>
</reference>
<reference key="2">
    <citation type="journal article" date="2008" name="PLoS ONE">
        <title>A recalibrated molecular clock and independent origins for the cholera pandemic clones.</title>
        <authorList>
            <person name="Feng L."/>
            <person name="Reeves P.R."/>
            <person name="Lan R."/>
            <person name="Ren Y."/>
            <person name="Gao C."/>
            <person name="Zhou Z."/>
            <person name="Ren Y."/>
            <person name="Cheng J."/>
            <person name="Wang W."/>
            <person name="Wang J."/>
            <person name="Qian W."/>
            <person name="Li D."/>
            <person name="Wang L."/>
        </authorList>
    </citation>
    <scope>NUCLEOTIDE SEQUENCE [LARGE SCALE GENOMIC DNA]</scope>
    <source>
        <strain>ATCC 39541 / Classical Ogawa 395 / O395</strain>
    </source>
</reference>
<dbReference type="EMBL" id="CP000627">
    <property type="protein sequence ID" value="ABQ21805.1"/>
    <property type="molecule type" value="Genomic_DNA"/>
</dbReference>
<dbReference type="EMBL" id="CP001235">
    <property type="protein sequence ID" value="ACP09415.1"/>
    <property type="molecule type" value="Genomic_DNA"/>
</dbReference>
<dbReference type="RefSeq" id="WP_000621906.1">
    <property type="nucleotide sequence ID" value="NZ_JAACZH010000002.1"/>
</dbReference>
<dbReference type="SMR" id="A5F1Q1"/>
<dbReference type="KEGG" id="vco:VC0395_A0907"/>
<dbReference type="KEGG" id="vcr:VC395_1407"/>
<dbReference type="PATRIC" id="fig|345073.21.peg.1366"/>
<dbReference type="eggNOG" id="COG3131">
    <property type="taxonomic scope" value="Bacteria"/>
</dbReference>
<dbReference type="HOGENOM" id="CLU_023403_2_0_6"/>
<dbReference type="OrthoDB" id="335750at2"/>
<dbReference type="UniPathway" id="UPA00637"/>
<dbReference type="Proteomes" id="UP000000249">
    <property type="component" value="Chromosome 2"/>
</dbReference>
<dbReference type="GO" id="GO:0030288">
    <property type="term" value="C:outer membrane-bounded periplasmic space"/>
    <property type="evidence" value="ECO:0007669"/>
    <property type="project" value="TreeGrafter"/>
</dbReference>
<dbReference type="GO" id="GO:0030246">
    <property type="term" value="F:carbohydrate binding"/>
    <property type="evidence" value="ECO:0007669"/>
    <property type="project" value="InterPro"/>
</dbReference>
<dbReference type="GO" id="GO:0003824">
    <property type="term" value="F:catalytic activity"/>
    <property type="evidence" value="ECO:0007669"/>
    <property type="project" value="InterPro"/>
</dbReference>
<dbReference type="GO" id="GO:0051274">
    <property type="term" value="P:beta-glucan biosynthetic process"/>
    <property type="evidence" value="ECO:0007669"/>
    <property type="project" value="TreeGrafter"/>
</dbReference>
<dbReference type="FunFam" id="2.60.40.10:FF:001915">
    <property type="entry name" value="Glucans biosynthesis protein G"/>
    <property type="match status" value="1"/>
</dbReference>
<dbReference type="FunFam" id="2.70.98.10:FF:000001">
    <property type="entry name" value="Glucans biosynthesis protein G"/>
    <property type="match status" value="1"/>
</dbReference>
<dbReference type="Gene3D" id="2.70.98.10">
    <property type="match status" value="1"/>
</dbReference>
<dbReference type="Gene3D" id="2.60.40.10">
    <property type="entry name" value="Immunoglobulins"/>
    <property type="match status" value="1"/>
</dbReference>
<dbReference type="HAMAP" id="MF_01069">
    <property type="entry name" value="MdoG_OpgG"/>
    <property type="match status" value="1"/>
</dbReference>
<dbReference type="InterPro" id="IPR011013">
    <property type="entry name" value="Gal_mutarotase_sf_dom"/>
</dbReference>
<dbReference type="InterPro" id="IPR014718">
    <property type="entry name" value="GH-type_carb-bd"/>
</dbReference>
<dbReference type="InterPro" id="IPR014438">
    <property type="entry name" value="Glucan_biosyn_MdoG/MdoD"/>
</dbReference>
<dbReference type="InterPro" id="IPR007444">
    <property type="entry name" value="Glucan_biosyn_MdoG_C"/>
</dbReference>
<dbReference type="InterPro" id="IPR013783">
    <property type="entry name" value="Ig-like_fold"/>
</dbReference>
<dbReference type="InterPro" id="IPR014756">
    <property type="entry name" value="Ig_E-set"/>
</dbReference>
<dbReference type="InterPro" id="IPR023704">
    <property type="entry name" value="MdoG_OpgG"/>
</dbReference>
<dbReference type="PANTHER" id="PTHR30504">
    <property type="entry name" value="GLUCANS BIOSYNTHESIS PROTEIN"/>
    <property type="match status" value="1"/>
</dbReference>
<dbReference type="PANTHER" id="PTHR30504:SF2">
    <property type="entry name" value="GLUCANS BIOSYNTHESIS PROTEIN G"/>
    <property type="match status" value="1"/>
</dbReference>
<dbReference type="Pfam" id="PF04349">
    <property type="entry name" value="MdoG"/>
    <property type="match status" value="1"/>
</dbReference>
<dbReference type="PIRSF" id="PIRSF006281">
    <property type="entry name" value="MdoG"/>
    <property type="match status" value="1"/>
</dbReference>
<dbReference type="SUPFAM" id="SSF81296">
    <property type="entry name" value="E set domains"/>
    <property type="match status" value="1"/>
</dbReference>
<dbReference type="SUPFAM" id="SSF74650">
    <property type="entry name" value="Galactose mutarotase-like"/>
    <property type="match status" value="1"/>
</dbReference>
<accession>A5F1Q1</accession>
<accession>C3M049</accession>
<protein>
    <recommendedName>
        <fullName evidence="1">Glucans biosynthesis protein G</fullName>
    </recommendedName>
</protein>
<name>OPGG_VIBC3</name>
<sequence length="545" mass="60874">MIRVSSAVQRHAQKLIVLFSLLFGASLLMSDNGFATDIKNTNASSPVNSESTKPTKAGEVKNVVRFAKTGSFDNDTVVRLARQLAKKPYVALKDPLPESLANISYDEYRDIRFKPDSAVWKADGLPYQMQLFHRGFFFQDLIEIALVEGNQATHLSYDPNMFTAGEVLQQNLPTEDIGYSGLRVHYPLNSPSYFDELFVFQGASYFRALGKGNAYGLSARGLAIKTADPAGEEFPIFRAFWVEKPNYDTNLIVVHALLDSPSVSGAYRFSIRPGENTRMDVEAVLFPRVELSKVGLAPATSMFMHSPNGREKTDDFRPSVHDSDGLLMINGRGERLWRPLANPSTLQVSAFMDNSPQGFGLMQRERDYANYQDLEAHYEKRPSLWVEPVGNWGPGAVVLTEIPTQSEIHDNIVAFWKPAQPLAAGSEYRFSYHLNWGAQPEANPQAITVSRTASGRADIAKPTPKRLFVIDYQVQGAKPAQMPEPKVRSNAGVISNVVLRDNPANNGYRLSFEFDPGEVTLAELRAELTLQEARPVETWLYRWTL</sequence>
<comment type="function">
    <text evidence="1">Involved in the biosynthesis of osmoregulated periplasmic glucans (OPGs).</text>
</comment>
<comment type="pathway">
    <text evidence="1">Glycan metabolism; osmoregulated periplasmic glucan (OPG) biosynthesis.</text>
</comment>
<comment type="subcellular location">
    <subcellularLocation>
        <location evidence="1">Periplasm</location>
    </subcellularLocation>
</comment>
<comment type="similarity">
    <text evidence="1">Belongs to the OpgD/OpgG family.</text>
</comment>
<keyword id="KW-0574">Periplasm</keyword>
<keyword id="KW-0732">Signal</keyword>
<gene>
    <name evidence="1" type="primary">opgG</name>
    <name type="synonym">mdoG</name>
    <name type="ordered locus">VC0395_A0907</name>
    <name type="ordered locus">VC395_1407</name>
</gene>
<organism>
    <name type="scientific">Vibrio cholerae serotype O1 (strain ATCC 39541 / Classical Ogawa 395 / O395)</name>
    <dbReference type="NCBI Taxonomy" id="345073"/>
    <lineage>
        <taxon>Bacteria</taxon>
        <taxon>Pseudomonadati</taxon>
        <taxon>Pseudomonadota</taxon>
        <taxon>Gammaproteobacteria</taxon>
        <taxon>Vibrionales</taxon>
        <taxon>Vibrionaceae</taxon>
        <taxon>Vibrio</taxon>
    </lineage>
</organism>